<proteinExistence type="inferred from homology"/>
<reference key="1">
    <citation type="journal article" date="2005" name="Proc. Natl. Acad. Sci. U.S.A.">
        <title>The genome of Salinibacter ruber: convergence and gene exchange among hyperhalophilic bacteria and archaea.</title>
        <authorList>
            <person name="Mongodin E.F."/>
            <person name="Nelson K.E."/>
            <person name="Daugherty S."/>
            <person name="DeBoy R.T."/>
            <person name="Wister J."/>
            <person name="Khouri H."/>
            <person name="Weidman J."/>
            <person name="Walsh D.A."/>
            <person name="Papke R.T."/>
            <person name="Sanchez Perez G."/>
            <person name="Sharma A.K."/>
            <person name="Nesbo C.L."/>
            <person name="MacLeod D."/>
            <person name="Bapteste E."/>
            <person name="Doolittle W.F."/>
            <person name="Charlebois R.L."/>
            <person name="Legault B."/>
            <person name="Rodriguez-Valera F."/>
        </authorList>
    </citation>
    <scope>NUCLEOTIDE SEQUENCE [LARGE SCALE GENOMIC DNA]</scope>
    <source>
        <strain>DSM 13855 / CECT 5946 / M31</strain>
    </source>
</reference>
<name>PCKA1_SALRD</name>
<organism>
    <name type="scientific">Salinibacter ruber (strain DSM 13855 / M31)</name>
    <dbReference type="NCBI Taxonomy" id="309807"/>
    <lineage>
        <taxon>Bacteria</taxon>
        <taxon>Pseudomonadati</taxon>
        <taxon>Rhodothermota</taxon>
        <taxon>Rhodothermia</taxon>
        <taxon>Rhodothermales</taxon>
        <taxon>Salinibacteraceae</taxon>
        <taxon>Salinibacter</taxon>
    </lineage>
</organism>
<dbReference type="EC" id="4.1.1.49" evidence="1"/>
<dbReference type="EMBL" id="CP000159">
    <property type="protein sequence ID" value="ABC44749.1"/>
    <property type="molecule type" value="Genomic_DNA"/>
</dbReference>
<dbReference type="RefSeq" id="WP_011404573.1">
    <property type="nucleotide sequence ID" value="NC_007677.1"/>
</dbReference>
<dbReference type="RefSeq" id="YP_445948.1">
    <property type="nucleotide sequence ID" value="NC_007677.1"/>
</dbReference>
<dbReference type="SMR" id="Q2S1I3"/>
<dbReference type="STRING" id="309807.SRU_1835"/>
<dbReference type="EnsemblBacteria" id="ABC44749">
    <property type="protein sequence ID" value="ABC44749"/>
    <property type="gene ID" value="SRU_1835"/>
</dbReference>
<dbReference type="KEGG" id="sru:SRU_1835"/>
<dbReference type="PATRIC" id="fig|309807.25.peg.1902"/>
<dbReference type="eggNOG" id="COG1866">
    <property type="taxonomic scope" value="Bacteria"/>
</dbReference>
<dbReference type="HOGENOM" id="CLU_018247_0_1_10"/>
<dbReference type="OrthoDB" id="9806325at2"/>
<dbReference type="UniPathway" id="UPA00138"/>
<dbReference type="Proteomes" id="UP000008674">
    <property type="component" value="Chromosome"/>
</dbReference>
<dbReference type="GO" id="GO:0005829">
    <property type="term" value="C:cytosol"/>
    <property type="evidence" value="ECO:0007669"/>
    <property type="project" value="TreeGrafter"/>
</dbReference>
<dbReference type="GO" id="GO:0005524">
    <property type="term" value="F:ATP binding"/>
    <property type="evidence" value="ECO:0007669"/>
    <property type="project" value="UniProtKB-UniRule"/>
</dbReference>
<dbReference type="GO" id="GO:0046872">
    <property type="term" value="F:metal ion binding"/>
    <property type="evidence" value="ECO:0007669"/>
    <property type="project" value="UniProtKB-KW"/>
</dbReference>
<dbReference type="GO" id="GO:0004612">
    <property type="term" value="F:phosphoenolpyruvate carboxykinase (ATP) activity"/>
    <property type="evidence" value="ECO:0007669"/>
    <property type="project" value="UniProtKB-UniRule"/>
</dbReference>
<dbReference type="GO" id="GO:0006094">
    <property type="term" value="P:gluconeogenesis"/>
    <property type="evidence" value="ECO:0007669"/>
    <property type="project" value="UniProtKB-UniRule"/>
</dbReference>
<dbReference type="CDD" id="cd00484">
    <property type="entry name" value="PEPCK_ATP"/>
    <property type="match status" value="1"/>
</dbReference>
<dbReference type="Gene3D" id="3.90.228.20">
    <property type="match status" value="1"/>
</dbReference>
<dbReference type="Gene3D" id="3.40.449.10">
    <property type="entry name" value="Phosphoenolpyruvate Carboxykinase, domain 1"/>
    <property type="match status" value="1"/>
</dbReference>
<dbReference type="Gene3D" id="2.170.8.10">
    <property type="entry name" value="Phosphoenolpyruvate Carboxykinase, domain 2"/>
    <property type="match status" value="1"/>
</dbReference>
<dbReference type="HAMAP" id="MF_00453">
    <property type="entry name" value="PEPCK_ATP"/>
    <property type="match status" value="1"/>
</dbReference>
<dbReference type="InterPro" id="IPR001272">
    <property type="entry name" value="PEP_carboxykinase_ATP"/>
</dbReference>
<dbReference type="InterPro" id="IPR013035">
    <property type="entry name" value="PEP_carboxykinase_C"/>
</dbReference>
<dbReference type="InterPro" id="IPR008210">
    <property type="entry name" value="PEP_carboxykinase_N"/>
</dbReference>
<dbReference type="InterPro" id="IPR015994">
    <property type="entry name" value="PEPCK_ATP_CS"/>
</dbReference>
<dbReference type="NCBIfam" id="TIGR00224">
    <property type="entry name" value="pckA"/>
    <property type="match status" value="1"/>
</dbReference>
<dbReference type="NCBIfam" id="NF006820">
    <property type="entry name" value="PRK09344.1-2"/>
    <property type="match status" value="1"/>
</dbReference>
<dbReference type="NCBIfam" id="NF006821">
    <property type="entry name" value="PRK09344.1-3"/>
    <property type="match status" value="1"/>
</dbReference>
<dbReference type="PANTHER" id="PTHR30031:SF0">
    <property type="entry name" value="PHOSPHOENOLPYRUVATE CARBOXYKINASE (ATP)"/>
    <property type="match status" value="1"/>
</dbReference>
<dbReference type="PANTHER" id="PTHR30031">
    <property type="entry name" value="PHOSPHOENOLPYRUVATE CARBOXYKINASE ATP"/>
    <property type="match status" value="1"/>
</dbReference>
<dbReference type="Pfam" id="PF01293">
    <property type="entry name" value="PEPCK_ATP"/>
    <property type="match status" value="1"/>
</dbReference>
<dbReference type="PIRSF" id="PIRSF006294">
    <property type="entry name" value="PEP_crbxkin"/>
    <property type="match status" value="1"/>
</dbReference>
<dbReference type="SUPFAM" id="SSF68923">
    <property type="entry name" value="PEP carboxykinase N-terminal domain"/>
    <property type="match status" value="1"/>
</dbReference>
<dbReference type="SUPFAM" id="SSF53795">
    <property type="entry name" value="PEP carboxykinase-like"/>
    <property type="match status" value="1"/>
</dbReference>
<dbReference type="PROSITE" id="PS00532">
    <property type="entry name" value="PEPCK_ATP"/>
    <property type="match status" value="1"/>
</dbReference>
<feature type="chain" id="PRO_0000236938" description="Phosphoenolpyruvate carboxykinase (ATP) 1">
    <location>
        <begin position="1"/>
        <end position="535"/>
    </location>
</feature>
<feature type="binding site" evidence="1">
    <location>
        <position position="58"/>
    </location>
    <ligand>
        <name>substrate</name>
    </ligand>
</feature>
<feature type="binding site" evidence="1">
    <location>
        <position position="193"/>
    </location>
    <ligand>
        <name>substrate</name>
    </ligand>
</feature>
<feature type="binding site" evidence="1">
    <location>
        <position position="199"/>
    </location>
    <ligand>
        <name>ATP</name>
        <dbReference type="ChEBI" id="CHEBI:30616"/>
    </ligand>
</feature>
<feature type="binding site" evidence="1">
    <location>
        <position position="199"/>
    </location>
    <ligand>
        <name>Mn(2+)</name>
        <dbReference type="ChEBI" id="CHEBI:29035"/>
    </ligand>
</feature>
<feature type="binding site" evidence="1">
    <location>
        <position position="199"/>
    </location>
    <ligand>
        <name>substrate</name>
    </ligand>
</feature>
<feature type="binding site" evidence="1">
    <location>
        <position position="218"/>
    </location>
    <ligand>
        <name>ATP</name>
        <dbReference type="ChEBI" id="CHEBI:30616"/>
    </ligand>
</feature>
<feature type="binding site" evidence="1">
    <location>
        <position position="218"/>
    </location>
    <ligand>
        <name>Mn(2+)</name>
        <dbReference type="ChEBI" id="CHEBI:29035"/>
    </ligand>
</feature>
<feature type="binding site" evidence="1">
    <location>
        <begin position="234"/>
        <end position="242"/>
    </location>
    <ligand>
        <name>ATP</name>
        <dbReference type="ChEBI" id="CHEBI:30616"/>
    </ligand>
</feature>
<feature type="binding site" evidence="1">
    <location>
        <position position="255"/>
    </location>
    <ligand>
        <name>Mn(2+)</name>
        <dbReference type="ChEBI" id="CHEBI:29035"/>
    </ligand>
</feature>
<feature type="binding site" evidence="1">
    <location>
        <position position="283"/>
    </location>
    <ligand>
        <name>ATP</name>
        <dbReference type="ChEBI" id="CHEBI:30616"/>
    </ligand>
</feature>
<feature type="binding site" evidence="1">
    <location>
        <position position="321"/>
    </location>
    <ligand>
        <name>ATP</name>
        <dbReference type="ChEBI" id="CHEBI:30616"/>
    </ligand>
</feature>
<feature type="binding site" evidence="1">
    <location>
        <position position="321"/>
    </location>
    <ligand>
        <name>substrate</name>
    </ligand>
</feature>
<feature type="binding site" evidence="1">
    <location>
        <begin position="440"/>
        <end position="441"/>
    </location>
    <ligand>
        <name>ATP</name>
        <dbReference type="ChEBI" id="CHEBI:30616"/>
    </ligand>
</feature>
<feature type="binding site" evidence="1">
    <location>
        <position position="446"/>
    </location>
    <ligand>
        <name>ATP</name>
        <dbReference type="ChEBI" id="CHEBI:30616"/>
    </ligand>
</feature>
<comment type="function">
    <text evidence="1">Involved in the gluconeogenesis. Catalyzes the conversion of oxaloacetate (OAA) to phosphoenolpyruvate (PEP) through direct phosphoryl transfer between the nucleoside triphosphate and OAA.</text>
</comment>
<comment type="catalytic activity">
    <reaction evidence="1">
        <text>oxaloacetate + ATP = phosphoenolpyruvate + ADP + CO2</text>
        <dbReference type="Rhea" id="RHEA:18617"/>
        <dbReference type="ChEBI" id="CHEBI:16452"/>
        <dbReference type="ChEBI" id="CHEBI:16526"/>
        <dbReference type="ChEBI" id="CHEBI:30616"/>
        <dbReference type="ChEBI" id="CHEBI:58702"/>
        <dbReference type="ChEBI" id="CHEBI:456216"/>
        <dbReference type="EC" id="4.1.1.49"/>
    </reaction>
</comment>
<comment type="cofactor">
    <cofactor evidence="1">
        <name>Mn(2+)</name>
        <dbReference type="ChEBI" id="CHEBI:29035"/>
    </cofactor>
    <text evidence="1">Binds 1 Mn(2+) ion per subunit.</text>
</comment>
<comment type="pathway">
    <text evidence="1">Carbohydrate biosynthesis; gluconeogenesis.</text>
</comment>
<comment type="subcellular location">
    <subcellularLocation>
        <location evidence="1">Cytoplasm</location>
    </subcellularLocation>
</comment>
<comment type="similarity">
    <text evidence="1">Belongs to the phosphoenolpyruvate carboxykinase (ATP) family.</text>
</comment>
<keyword id="KW-0067">ATP-binding</keyword>
<keyword id="KW-0963">Cytoplasm</keyword>
<keyword id="KW-0210">Decarboxylase</keyword>
<keyword id="KW-0312">Gluconeogenesis</keyword>
<keyword id="KW-0456">Lyase</keyword>
<keyword id="KW-0464">Manganese</keyword>
<keyword id="KW-0479">Metal-binding</keyword>
<keyword id="KW-0547">Nucleotide-binding</keyword>
<keyword id="KW-1185">Reference proteome</keyword>
<gene>
    <name evidence="1" type="primary">pckA1</name>
    <name type="ordered locus">SRU_1835</name>
</gene>
<protein>
    <recommendedName>
        <fullName evidence="1">Phosphoenolpyruvate carboxykinase (ATP) 1</fullName>
        <shortName evidence="1">PCK 1</shortName>
        <shortName evidence="1">PEP carboxykinase 1</shortName>
        <shortName evidence="1">PEPCK 1</shortName>
        <ecNumber evidence="1">4.1.1.49</ecNumber>
    </recommendedName>
</protein>
<sequence>MPLPNHVTSHLRSLQLAPAAVHYNLKRPRLYEEALDRNEGQLAAGGPLVTRTAPYTGRSPKDRFIVRDASVADQINWGEVNQPTDRATFDHLHERMAEHAEGRDLFVQDLHAGWDESYRLPVRIITEKAWHSLFARNMFVRPDGPVPDSFEPGFTVVDLCEFEADPERDGTHSEAAVFVDIAQNLILIGGTHYGGEIKKSIFSVLNYMLPEEGVLPMHCSANEGEDGDTAVFFGLSGTGKTTLSADASRTLIGDDEHGWSDRGVYNFEGGCYAKMIDITPESEPEIHGTTEEFGTILENVIVDPDTREPDFSDDTITQNTRGSYPLHYIPNTSSDGRGGHPDHVLFLTYDAFGVLPPVSELSPAQAMYHFLSGYTAKVAGTEAGVNEPKATFSTCFGEPFMVRDPSVYAELLGQKIRRHDTDCWLVNTGMTGGPYGVGHRIELDHTRAMVDAILDGTLGTVARTRDPVFGLSIPDRVPGVPDSVLTPRQTWGDPQAYDQHARELVDAFADNFETYVEQVGTEVRAAGPSLETIRG</sequence>
<evidence type="ECO:0000255" key="1">
    <source>
        <dbReference type="HAMAP-Rule" id="MF_00453"/>
    </source>
</evidence>
<accession>Q2S1I3</accession>